<organism>
    <name type="scientific">Rhizobium johnstonii (strain DSM 114642 / LMG 32736 / 3841)</name>
    <name type="common">Rhizobium leguminosarum bv. viciae</name>
    <dbReference type="NCBI Taxonomy" id="216596"/>
    <lineage>
        <taxon>Bacteria</taxon>
        <taxon>Pseudomonadati</taxon>
        <taxon>Pseudomonadota</taxon>
        <taxon>Alphaproteobacteria</taxon>
        <taxon>Hyphomicrobiales</taxon>
        <taxon>Rhizobiaceae</taxon>
        <taxon>Rhizobium/Agrobacterium group</taxon>
        <taxon>Rhizobium</taxon>
        <taxon>Rhizobium johnstonii</taxon>
    </lineage>
</organism>
<proteinExistence type="inferred from homology"/>
<sequence>MQADFVIIGSGSAGSALAYRLSEGGKNSVIVIEAGGSDFGPFIQMPAALAWPMSMKRYNWGYLSEPEANLNNRRITAPRGKVIGGSSSINGMVYVRGHAEDFNRWEELGASGWAYADVLPYFKRMEHSHGGEEGWRGTDGPLHVQRGGFTNPLFQAFVEAGKQAGFETTEDYNGSKQEGFGLMEQTIFGGRRWSAANAYLKPALKRDNVKIVYGLAQRIVIEDGRATGVEIERNGRIEVVKANREVIVSASSFNSPKLLMLSGIGPGQHLQDMGIAVKADRPGVGANLQDHMEFYFQQVSTKPVSLYSWLPWFWQGVAGAQWLLSRGGLGASNQFEACAFLRSAPGLKQPDIQYHFLPVAISYDGKAAAKSHGFQVHVGYNLSKSRGSVSLRSADPKADPVLRFNYMSHAEDWEKFRHCVRLTREIFGQSAFHDYRGPEIQPGEGVQSDEEIDAFLREHLESAYHPCGTCRMGAKDDPMAVVDPQTRVIGIDGLRVADSSIFPHVTYGNLNGPSIMTGEKAADHILGKQPLARSNQEPWINPRAAVSDR</sequence>
<reference key="1">
    <citation type="journal article" date="2006" name="Genome Biol.">
        <title>The genome of Rhizobium leguminosarum has recognizable core and accessory components.</title>
        <authorList>
            <person name="Young J.P.W."/>
            <person name="Crossman L.C."/>
            <person name="Johnston A.W.B."/>
            <person name="Thomson N.R."/>
            <person name="Ghazoui Z.F."/>
            <person name="Hull K.H."/>
            <person name="Wexler M."/>
            <person name="Curson A.R.J."/>
            <person name="Todd J.D."/>
            <person name="Poole P.S."/>
            <person name="Mauchline T.H."/>
            <person name="East A.K."/>
            <person name="Quail M.A."/>
            <person name="Churcher C."/>
            <person name="Arrowsmith C."/>
            <person name="Cherevach I."/>
            <person name="Chillingworth T."/>
            <person name="Clarke K."/>
            <person name="Cronin A."/>
            <person name="Davis P."/>
            <person name="Fraser A."/>
            <person name="Hance Z."/>
            <person name="Hauser H."/>
            <person name="Jagels K."/>
            <person name="Moule S."/>
            <person name="Mungall K."/>
            <person name="Norbertczak H."/>
            <person name="Rabbinowitsch E."/>
            <person name="Sanders M."/>
            <person name="Simmonds M."/>
            <person name="Whitehead S."/>
            <person name="Parkhill J."/>
        </authorList>
    </citation>
    <scope>NUCLEOTIDE SEQUENCE [LARGE SCALE GENOMIC DNA]</scope>
    <source>
        <strain>DSM 114642 / LMG 32736 / 3841</strain>
    </source>
</reference>
<dbReference type="EC" id="1.1.99.1" evidence="1"/>
<dbReference type="EC" id="1.2.1.8" evidence="1"/>
<dbReference type="EMBL" id="AM236080">
    <property type="protein sequence ID" value="CAK06766.1"/>
    <property type="molecule type" value="Genomic_DNA"/>
</dbReference>
<dbReference type="RefSeq" id="WP_011650991.1">
    <property type="nucleotide sequence ID" value="NC_008380.1"/>
</dbReference>
<dbReference type="SMR" id="Q1MJU4"/>
<dbReference type="EnsemblBacteria" id="CAK06766">
    <property type="protein sequence ID" value="CAK06766"/>
    <property type="gene ID" value="RL1270"/>
</dbReference>
<dbReference type="KEGG" id="rle:RL1270"/>
<dbReference type="eggNOG" id="COG2303">
    <property type="taxonomic scope" value="Bacteria"/>
</dbReference>
<dbReference type="HOGENOM" id="CLU_002865_7_1_5"/>
<dbReference type="UniPathway" id="UPA00529">
    <property type="reaction ID" value="UER00385"/>
</dbReference>
<dbReference type="Proteomes" id="UP000006575">
    <property type="component" value="Chromosome"/>
</dbReference>
<dbReference type="GO" id="GO:0008802">
    <property type="term" value="F:betaine-aldehyde dehydrogenase (NAD+) activity"/>
    <property type="evidence" value="ECO:0007669"/>
    <property type="project" value="UniProtKB-EC"/>
</dbReference>
<dbReference type="GO" id="GO:0008812">
    <property type="term" value="F:choline dehydrogenase activity"/>
    <property type="evidence" value="ECO:0007669"/>
    <property type="project" value="UniProtKB-UniRule"/>
</dbReference>
<dbReference type="GO" id="GO:0050660">
    <property type="term" value="F:flavin adenine dinucleotide binding"/>
    <property type="evidence" value="ECO:0007669"/>
    <property type="project" value="InterPro"/>
</dbReference>
<dbReference type="GO" id="GO:0019285">
    <property type="term" value="P:glycine betaine biosynthetic process from choline"/>
    <property type="evidence" value="ECO:0007669"/>
    <property type="project" value="UniProtKB-UniRule"/>
</dbReference>
<dbReference type="Gene3D" id="3.50.50.60">
    <property type="entry name" value="FAD/NAD(P)-binding domain"/>
    <property type="match status" value="1"/>
</dbReference>
<dbReference type="Gene3D" id="3.30.560.10">
    <property type="entry name" value="Glucose Oxidase, domain 3"/>
    <property type="match status" value="1"/>
</dbReference>
<dbReference type="HAMAP" id="MF_00750">
    <property type="entry name" value="Choline_dehydrogen"/>
    <property type="match status" value="1"/>
</dbReference>
<dbReference type="InterPro" id="IPR011533">
    <property type="entry name" value="BetA"/>
</dbReference>
<dbReference type="InterPro" id="IPR036188">
    <property type="entry name" value="FAD/NAD-bd_sf"/>
</dbReference>
<dbReference type="InterPro" id="IPR012132">
    <property type="entry name" value="GMC_OxRdtase"/>
</dbReference>
<dbReference type="InterPro" id="IPR000172">
    <property type="entry name" value="GMC_OxRdtase_N"/>
</dbReference>
<dbReference type="InterPro" id="IPR007867">
    <property type="entry name" value="GMC_OxRtase_C"/>
</dbReference>
<dbReference type="NCBIfam" id="TIGR01810">
    <property type="entry name" value="betA"/>
    <property type="match status" value="1"/>
</dbReference>
<dbReference type="NCBIfam" id="NF002550">
    <property type="entry name" value="PRK02106.1"/>
    <property type="match status" value="1"/>
</dbReference>
<dbReference type="PANTHER" id="PTHR11552:SF147">
    <property type="entry name" value="CHOLINE DEHYDROGENASE, MITOCHONDRIAL"/>
    <property type="match status" value="1"/>
</dbReference>
<dbReference type="PANTHER" id="PTHR11552">
    <property type="entry name" value="GLUCOSE-METHANOL-CHOLINE GMC OXIDOREDUCTASE"/>
    <property type="match status" value="1"/>
</dbReference>
<dbReference type="Pfam" id="PF05199">
    <property type="entry name" value="GMC_oxred_C"/>
    <property type="match status" value="1"/>
</dbReference>
<dbReference type="Pfam" id="PF00732">
    <property type="entry name" value="GMC_oxred_N"/>
    <property type="match status" value="1"/>
</dbReference>
<dbReference type="PIRSF" id="PIRSF000137">
    <property type="entry name" value="Alcohol_oxidase"/>
    <property type="match status" value="1"/>
</dbReference>
<dbReference type="SUPFAM" id="SSF54373">
    <property type="entry name" value="FAD-linked reductases, C-terminal domain"/>
    <property type="match status" value="1"/>
</dbReference>
<dbReference type="SUPFAM" id="SSF51905">
    <property type="entry name" value="FAD/NAD(P)-binding domain"/>
    <property type="match status" value="1"/>
</dbReference>
<dbReference type="PROSITE" id="PS00623">
    <property type="entry name" value="GMC_OXRED_1"/>
    <property type="match status" value="1"/>
</dbReference>
<dbReference type="PROSITE" id="PS00624">
    <property type="entry name" value="GMC_OXRED_2"/>
    <property type="match status" value="1"/>
</dbReference>
<accession>Q1MJU4</accession>
<gene>
    <name evidence="1" type="primary">betA</name>
    <name type="ordered locus">RL1270</name>
</gene>
<comment type="function">
    <text evidence="1">Involved in the biosynthesis of the osmoprotectant glycine betaine. Catalyzes the oxidation of choline to betaine aldehyde and betaine aldehyde to glycine betaine at the same rate.</text>
</comment>
<comment type="catalytic activity">
    <reaction evidence="1">
        <text>choline + A = betaine aldehyde + AH2</text>
        <dbReference type="Rhea" id="RHEA:17433"/>
        <dbReference type="ChEBI" id="CHEBI:13193"/>
        <dbReference type="ChEBI" id="CHEBI:15354"/>
        <dbReference type="ChEBI" id="CHEBI:15710"/>
        <dbReference type="ChEBI" id="CHEBI:17499"/>
        <dbReference type="EC" id="1.1.99.1"/>
    </reaction>
</comment>
<comment type="catalytic activity">
    <reaction evidence="1">
        <text>betaine aldehyde + NAD(+) + H2O = glycine betaine + NADH + 2 H(+)</text>
        <dbReference type="Rhea" id="RHEA:15305"/>
        <dbReference type="ChEBI" id="CHEBI:15377"/>
        <dbReference type="ChEBI" id="CHEBI:15378"/>
        <dbReference type="ChEBI" id="CHEBI:15710"/>
        <dbReference type="ChEBI" id="CHEBI:17750"/>
        <dbReference type="ChEBI" id="CHEBI:57540"/>
        <dbReference type="ChEBI" id="CHEBI:57945"/>
        <dbReference type="EC" id="1.2.1.8"/>
    </reaction>
</comment>
<comment type="cofactor">
    <cofactor evidence="1">
        <name>FAD</name>
        <dbReference type="ChEBI" id="CHEBI:57692"/>
    </cofactor>
</comment>
<comment type="pathway">
    <text evidence="1">Amine and polyamine biosynthesis; betaine biosynthesis via choline pathway; betaine aldehyde from choline (cytochrome c reductase route): step 1/1.</text>
</comment>
<comment type="similarity">
    <text evidence="1">Belongs to the GMC oxidoreductase family.</text>
</comment>
<name>BETA_RHIJ3</name>
<keyword id="KW-0274">FAD</keyword>
<keyword id="KW-0285">Flavoprotein</keyword>
<keyword id="KW-0520">NAD</keyword>
<keyword id="KW-0560">Oxidoreductase</keyword>
<evidence type="ECO:0000255" key="1">
    <source>
        <dbReference type="HAMAP-Rule" id="MF_00750"/>
    </source>
</evidence>
<feature type="chain" id="PRO_0000258933" description="Oxygen-dependent choline dehydrogenase">
    <location>
        <begin position="1"/>
        <end position="549"/>
    </location>
</feature>
<feature type="active site" description="Proton acceptor" evidence="1">
    <location>
        <position position="465"/>
    </location>
</feature>
<feature type="binding site" evidence="1">
    <location>
        <begin position="4"/>
        <end position="33"/>
    </location>
    <ligand>
        <name>FAD</name>
        <dbReference type="ChEBI" id="CHEBI:57692"/>
    </ligand>
</feature>
<protein>
    <recommendedName>
        <fullName evidence="1">Oxygen-dependent choline dehydrogenase</fullName>
        <shortName evidence="1">CDH</shortName>
        <shortName evidence="1">CHD</shortName>
        <ecNumber evidence="1">1.1.99.1</ecNumber>
    </recommendedName>
    <alternativeName>
        <fullName evidence="1">Betaine aldehyde dehydrogenase</fullName>
        <shortName evidence="1">BADH</shortName>
        <ecNumber evidence="1">1.2.1.8</ecNumber>
    </alternativeName>
</protein>